<dbReference type="EMBL" id="AJ879453">
    <property type="protein sequence ID" value="CAI53835.1"/>
    <property type="molecule type" value="Genomic_DNA"/>
</dbReference>
<dbReference type="RefSeq" id="YP_319804.1">
    <property type="nucleotide sequence ID" value="NC_007407.1"/>
</dbReference>
<dbReference type="SMR" id="Q3V4Z3"/>
<dbReference type="GeneID" id="3677458"/>
<dbReference type="GO" id="GO:0009507">
    <property type="term" value="C:chloroplast"/>
    <property type="evidence" value="ECO:0007669"/>
    <property type="project" value="UniProtKB-SubCell"/>
</dbReference>
<dbReference type="GO" id="GO:0005763">
    <property type="term" value="C:mitochondrial small ribosomal subunit"/>
    <property type="evidence" value="ECO:0007669"/>
    <property type="project" value="TreeGrafter"/>
</dbReference>
<dbReference type="GO" id="GO:0019843">
    <property type="term" value="F:rRNA binding"/>
    <property type="evidence" value="ECO:0007669"/>
    <property type="project" value="UniProtKB-UniRule"/>
</dbReference>
<dbReference type="GO" id="GO:0003735">
    <property type="term" value="F:structural constituent of ribosome"/>
    <property type="evidence" value="ECO:0007669"/>
    <property type="project" value="InterPro"/>
</dbReference>
<dbReference type="GO" id="GO:0000028">
    <property type="term" value="P:ribosomal small subunit assembly"/>
    <property type="evidence" value="ECO:0007669"/>
    <property type="project" value="TreeGrafter"/>
</dbReference>
<dbReference type="GO" id="GO:0006412">
    <property type="term" value="P:translation"/>
    <property type="evidence" value="ECO:0007669"/>
    <property type="project" value="UniProtKB-UniRule"/>
</dbReference>
<dbReference type="FunFam" id="3.30.860.10:FF:000001">
    <property type="entry name" value="30S ribosomal protein S19"/>
    <property type="match status" value="1"/>
</dbReference>
<dbReference type="Gene3D" id="3.30.860.10">
    <property type="entry name" value="30s Ribosomal Protein S19, Chain A"/>
    <property type="match status" value="1"/>
</dbReference>
<dbReference type="HAMAP" id="MF_00531">
    <property type="entry name" value="Ribosomal_uS19"/>
    <property type="match status" value="1"/>
</dbReference>
<dbReference type="InterPro" id="IPR002222">
    <property type="entry name" value="Ribosomal_uS19"/>
</dbReference>
<dbReference type="InterPro" id="IPR005732">
    <property type="entry name" value="Ribosomal_uS19_bac-type"/>
</dbReference>
<dbReference type="InterPro" id="IPR020934">
    <property type="entry name" value="Ribosomal_uS19_CS"/>
</dbReference>
<dbReference type="InterPro" id="IPR023575">
    <property type="entry name" value="Ribosomal_uS19_SF"/>
</dbReference>
<dbReference type="NCBIfam" id="TIGR01050">
    <property type="entry name" value="rpsS_bact"/>
    <property type="match status" value="1"/>
</dbReference>
<dbReference type="PANTHER" id="PTHR11880">
    <property type="entry name" value="RIBOSOMAL PROTEIN S19P FAMILY MEMBER"/>
    <property type="match status" value="1"/>
</dbReference>
<dbReference type="PANTHER" id="PTHR11880:SF8">
    <property type="entry name" value="SMALL RIBOSOMAL SUBUNIT PROTEIN US19M"/>
    <property type="match status" value="1"/>
</dbReference>
<dbReference type="Pfam" id="PF00203">
    <property type="entry name" value="Ribosomal_S19"/>
    <property type="match status" value="1"/>
</dbReference>
<dbReference type="PIRSF" id="PIRSF002144">
    <property type="entry name" value="Ribosomal_S19"/>
    <property type="match status" value="1"/>
</dbReference>
<dbReference type="PRINTS" id="PR00975">
    <property type="entry name" value="RIBOSOMALS19"/>
</dbReference>
<dbReference type="SUPFAM" id="SSF54570">
    <property type="entry name" value="Ribosomal protein S19"/>
    <property type="match status" value="1"/>
</dbReference>
<dbReference type="PROSITE" id="PS00323">
    <property type="entry name" value="RIBOSOMAL_S19"/>
    <property type="match status" value="1"/>
</dbReference>
<protein>
    <recommendedName>
        <fullName evidence="1">Small ribosomal subunit protein uS19c</fullName>
    </recommendedName>
    <alternativeName>
        <fullName evidence="2">30S ribosomal protein S19, chloroplastic</fullName>
    </alternativeName>
</protein>
<keyword id="KW-0150">Chloroplast</keyword>
<keyword id="KW-0934">Plastid</keyword>
<keyword id="KW-0687">Ribonucleoprotein</keyword>
<keyword id="KW-0689">Ribosomal protein</keyword>
<keyword id="KW-0694">RNA-binding</keyword>
<keyword id="KW-0699">rRNA-binding</keyword>
<proteinExistence type="inferred from homology"/>
<sequence length="92" mass="10629">MTRSLKKNPFVANHLLEKIEKLNMKEEKEIIVTWSRASTIIPTMIGHTIAIHNGKEHLPIYITDRMVGHKLGEFAPTLTFRGHARNDNKSRR</sequence>
<reference key="1">
    <citation type="journal article" date="2005" name="Mol. Biol. Evol.">
        <title>Analysis of Acorus calamus chloroplast genome and its phylogenetic implications.</title>
        <authorList>
            <person name="Goremykin V.V."/>
            <person name="Holland B."/>
            <person name="Hirsch-Ernst K.I."/>
            <person name="Hellwig F.H."/>
        </authorList>
    </citation>
    <scope>NUCLEOTIDE SEQUENCE [LARGE SCALE GENOMIC DNA]</scope>
</reference>
<name>RR19_ACOCL</name>
<feature type="chain" id="PRO_0000354329" description="Small ribosomal subunit protein uS19c">
    <location>
        <begin position="1"/>
        <end position="92"/>
    </location>
</feature>
<gene>
    <name evidence="1" type="primary">rps19</name>
</gene>
<comment type="function">
    <text evidence="1">Protein S19 forms a complex with S13 that binds strongly to the 16S ribosomal RNA.</text>
</comment>
<comment type="subcellular location">
    <subcellularLocation>
        <location>Plastid</location>
        <location>Chloroplast</location>
    </subcellularLocation>
</comment>
<comment type="similarity">
    <text evidence="1">Belongs to the universal ribosomal protein uS19 family.</text>
</comment>
<geneLocation type="chloroplast"/>
<organism>
    <name type="scientific">Acorus calamus</name>
    <name type="common">Sweet flag</name>
    <dbReference type="NCBI Taxonomy" id="4465"/>
    <lineage>
        <taxon>Eukaryota</taxon>
        <taxon>Viridiplantae</taxon>
        <taxon>Streptophyta</taxon>
        <taxon>Embryophyta</taxon>
        <taxon>Tracheophyta</taxon>
        <taxon>Spermatophyta</taxon>
        <taxon>Magnoliopsida</taxon>
        <taxon>Liliopsida</taxon>
        <taxon>Acoraceae</taxon>
        <taxon>Acorus</taxon>
    </lineage>
</organism>
<evidence type="ECO:0000255" key="1">
    <source>
        <dbReference type="HAMAP-Rule" id="MF_00531"/>
    </source>
</evidence>
<evidence type="ECO:0000305" key="2"/>
<accession>Q3V4Z3</accession>